<name>YL590_MIMIV</name>
<feature type="chain" id="PRO_0000071296" description="Uncharacterized protein L590">
    <location>
        <begin position="1"/>
        <end position="197"/>
    </location>
</feature>
<organismHost>
    <name type="scientific">Acanthamoeba polyphaga</name>
    <name type="common">Amoeba</name>
    <dbReference type="NCBI Taxonomy" id="5757"/>
</organismHost>
<keyword id="KW-1185">Reference proteome</keyword>
<reference key="1">
    <citation type="journal article" date="2004" name="Science">
        <title>The 1.2-megabase genome sequence of Mimivirus.</title>
        <authorList>
            <person name="Raoult D."/>
            <person name="Audic S."/>
            <person name="Robert C."/>
            <person name="Abergel C."/>
            <person name="Renesto P."/>
            <person name="Ogata H."/>
            <person name="La Scola B."/>
            <person name="Susan M."/>
            <person name="Claverie J.-M."/>
        </authorList>
    </citation>
    <scope>NUCLEOTIDE SEQUENCE [LARGE SCALE GENOMIC DNA]</scope>
    <source>
        <strain>Rowbotham-Bradford</strain>
    </source>
</reference>
<sequence>MYIYRYNMYFVKKINLDSEKQYKSSEIVEHVNKSISSALSALENVARTFVKEECGREAGEQVKIIEIHDFNQVNEPTVDSMLLYRLIDDKHRIFVYQKKTTISKVSAWTWGTNDVVTSQFGRICIFELEEYNKLSVPSFQNQIFFTPNEEMVAVGPAKIRIPKPMTMAPMCDLIDELKKSPKFKARFECMSDSEISY</sequence>
<dbReference type="EMBL" id="AY653733">
    <property type="protein sequence ID" value="AAV50853.1"/>
    <property type="molecule type" value="Genomic_DNA"/>
</dbReference>
<dbReference type="KEGG" id="vg:9925226"/>
<dbReference type="OrthoDB" id="15355at10239"/>
<dbReference type="Proteomes" id="UP000001134">
    <property type="component" value="Genome"/>
</dbReference>
<protein>
    <recommendedName>
        <fullName>Uncharacterized protein L590</fullName>
    </recommendedName>
</protein>
<organism>
    <name type="scientific">Acanthamoeba polyphaga mimivirus</name>
    <name type="common">APMV</name>
    <dbReference type="NCBI Taxonomy" id="212035"/>
    <lineage>
        <taxon>Viruses</taxon>
        <taxon>Varidnaviria</taxon>
        <taxon>Bamfordvirae</taxon>
        <taxon>Nucleocytoviricota</taxon>
        <taxon>Megaviricetes</taxon>
        <taxon>Imitervirales</taxon>
        <taxon>Mimiviridae</taxon>
        <taxon>Megamimivirinae</taxon>
        <taxon>Mimivirus</taxon>
        <taxon>Mimivirus bradfordmassiliense</taxon>
    </lineage>
</organism>
<accession>Q5UP48</accession>
<gene>
    <name type="ordered locus">MIMI_L590</name>
</gene>
<proteinExistence type="predicted"/>